<name>Y1087_BACAH</name>
<evidence type="ECO:0000255" key="1">
    <source>
        <dbReference type="HAMAP-Rule" id="MF_01444"/>
    </source>
</evidence>
<gene>
    <name type="ordered locus">BALH_1087</name>
</gene>
<dbReference type="EC" id="3.1.-.-" evidence="1"/>
<dbReference type="EMBL" id="CP000485">
    <property type="protein sequence ID" value="ABK84446.1"/>
    <property type="molecule type" value="Genomic_DNA"/>
</dbReference>
<dbReference type="RefSeq" id="WP_000765876.1">
    <property type="nucleotide sequence ID" value="NC_008600.1"/>
</dbReference>
<dbReference type="SMR" id="A0RB53"/>
<dbReference type="KEGG" id="btl:BALH_1087"/>
<dbReference type="HOGENOM" id="CLU_132020_0_0_9"/>
<dbReference type="GO" id="GO:0016788">
    <property type="term" value="F:hydrolase activity, acting on ester bonds"/>
    <property type="evidence" value="ECO:0007669"/>
    <property type="project" value="UniProtKB-UniRule"/>
</dbReference>
<dbReference type="Gene3D" id="3.90.1140.10">
    <property type="entry name" value="Cyclic phosphodiesterase"/>
    <property type="match status" value="1"/>
</dbReference>
<dbReference type="HAMAP" id="MF_01444">
    <property type="entry name" value="2H_phosphoesterase_YjcG"/>
    <property type="match status" value="1"/>
</dbReference>
<dbReference type="InterPro" id="IPR050580">
    <property type="entry name" value="2H_phosphoesterase_YjcG-like"/>
</dbReference>
<dbReference type="InterPro" id="IPR009097">
    <property type="entry name" value="Cyclic_Pdiesterase"/>
</dbReference>
<dbReference type="InterPro" id="IPR022932">
    <property type="entry name" value="YjcG"/>
</dbReference>
<dbReference type="NCBIfam" id="NF010223">
    <property type="entry name" value="PRK13679.1"/>
    <property type="match status" value="1"/>
</dbReference>
<dbReference type="PANTHER" id="PTHR40037:SF1">
    <property type="entry name" value="PHOSPHOESTERASE SAOUHSC_00951-RELATED"/>
    <property type="match status" value="1"/>
</dbReference>
<dbReference type="PANTHER" id="PTHR40037">
    <property type="entry name" value="PHOSPHOESTERASE YJCG-RELATED"/>
    <property type="match status" value="1"/>
</dbReference>
<dbReference type="Pfam" id="PF13563">
    <property type="entry name" value="2_5_RNA_ligase2"/>
    <property type="match status" value="1"/>
</dbReference>
<dbReference type="SUPFAM" id="SSF55144">
    <property type="entry name" value="LigT-like"/>
    <property type="match status" value="1"/>
</dbReference>
<sequence>MKLGIVIFPSKMIQDKANGLRKRYDPHYALVPPHITLKTPFETQDEQLESIVNELHTIASKTNPFTLHVGKVGSFAPVNNVIYFKVEKTPELTFLNEEMHSGFFTQEREYAFVPHLTIGQGLSDAEHADVLGRLRMKDFYYEQPIDRFHLLYQLENGTWTVHETFRLGKGNN</sequence>
<comment type="similarity">
    <text evidence="1">Belongs to the 2H phosphoesterase superfamily. YjcG family.</text>
</comment>
<reference key="1">
    <citation type="journal article" date="2007" name="J. Bacteriol.">
        <title>The complete genome sequence of Bacillus thuringiensis Al Hakam.</title>
        <authorList>
            <person name="Challacombe J.F."/>
            <person name="Altherr M.R."/>
            <person name="Xie G."/>
            <person name="Bhotika S.S."/>
            <person name="Brown N."/>
            <person name="Bruce D."/>
            <person name="Campbell C.S."/>
            <person name="Campbell M.L."/>
            <person name="Chen J."/>
            <person name="Chertkov O."/>
            <person name="Cleland C."/>
            <person name="Dimitrijevic M."/>
            <person name="Doggett N.A."/>
            <person name="Fawcett J.J."/>
            <person name="Glavina T."/>
            <person name="Goodwin L.A."/>
            <person name="Green L.D."/>
            <person name="Han C.S."/>
            <person name="Hill K.K."/>
            <person name="Hitchcock P."/>
            <person name="Jackson P.J."/>
            <person name="Keim P."/>
            <person name="Kewalramani A.R."/>
            <person name="Longmire J."/>
            <person name="Lucas S."/>
            <person name="Malfatti S."/>
            <person name="Martinez D."/>
            <person name="McMurry K."/>
            <person name="Meincke L.J."/>
            <person name="Misra M."/>
            <person name="Moseman B.L."/>
            <person name="Mundt M."/>
            <person name="Munk A.C."/>
            <person name="Okinaka R.T."/>
            <person name="Parson-Quintana B."/>
            <person name="Reilly L.P."/>
            <person name="Richardson P."/>
            <person name="Robinson D.L."/>
            <person name="Saunders E."/>
            <person name="Tapia R."/>
            <person name="Tesmer J.G."/>
            <person name="Thayer N."/>
            <person name="Thompson L.S."/>
            <person name="Tice H."/>
            <person name="Ticknor L.O."/>
            <person name="Wills P.L."/>
            <person name="Gilna P."/>
            <person name="Brettin T.S."/>
        </authorList>
    </citation>
    <scope>NUCLEOTIDE SEQUENCE [LARGE SCALE GENOMIC DNA]</scope>
    <source>
        <strain>Al Hakam</strain>
    </source>
</reference>
<protein>
    <recommendedName>
        <fullName evidence="1">Putative phosphoesterase BALH_1087</fullName>
        <ecNumber evidence="1">3.1.-.-</ecNumber>
    </recommendedName>
</protein>
<organism>
    <name type="scientific">Bacillus thuringiensis (strain Al Hakam)</name>
    <dbReference type="NCBI Taxonomy" id="412694"/>
    <lineage>
        <taxon>Bacteria</taxon>
        <taxon>Bacillati</taxon>
        <taxon>Bacillota</taxon>
        <taxon>Bacilli</taxon>
        <taxon>Bacillales</taxon>
        <taxon>Bacillaceae</taxon>
        <taxon>Bacillus</taxon>
        <taxon>Bacillus cereus group</taxon>
    </lineage>
</organism>
<proteinExistence type="inferred from homology"/>
<accession>A0RB53</accession>
<keyword id="KW-0378">Hydrolase</keyword>
<feature type="chain" id="PRO_0000299332" description="Putative phosphoesterase BALH_1087">
    <location>
        <begin position="1"/>
        <end position="172"/>
    </location>
</feature>
<feature type="short sequence motif" description="HXTX 1" evidence="1">
    <location>
        <begin position="34"/>
        <end position="37"/>
    </location>
</feature>
<feature type="short sequence motif" description="HXTX 2" evidence="1">
    <location>
        <begin position="115"/>
        <end position="118"/>
    </location>
</feature>
<feature type="active site" description="Proton donor" evidence="1">
    <location>
        <position position="34"/>
    </location>
</feature>
<feature type="active site" description="Proton acceptor" evidence="1">
    <location>
        <position position="115"/>
    </location>
</feature>